<reference key="1">
    <citation type="submission" date="2006-12" db="EMBL/GenBank/DDBJ databases">
        <title>Complete sequence of Shewanella sp. W3-18-1.</title>
        <authorList>
            <consortium name="US DOE Joint Genome Institute"/>
            <person name="Copeland A."/>
            <person name="Lucas S."/>
            <person name="Lapidus A."/>
            <person name="Barry K."/>
            <person name="Detter J.C."/>
            <person name="Glavina del Rio T."/>
            <person name="Hammon N."/>
            <person name="Israni S."/>
            <person name="Dalin E."/>
            <person name="Tice H."/>
            <person name="Pitluck S."/>
            <person name="Chain P."/>
            <person name="Malfatti S."/>
            <person name="Shin M."/>
            <person name="Vergez L."/>
            <person name="Schmutz J."/>
            <person name="Larimer F."/>
            <person name="Land M."/>
            <person name="Hauser L."/>
            <person name="Kyrpides N."/>
            <person name="Lykidis A."/>
            <person name="Tiedje J."/>
            <person name="Richardson P."/>
        </authorList>
    </citation>
    <scope>NUCLEOTIDE SEQUENCE [LARGE SCALE GENOMIC DNA]</scope>
    <source>
        <strain>W3-18-1</strain>
    </source>
</reference>
<dbReference type="EMBL" id="CP000503">
    <property type="protein sequence ID" value="ABM23022.1"/>
    <property type="molecule type" value="Genomic_DNA"/>
</dbReference>
<dbReference type="RefSeq" id="WP_011787577.1">
    <property type="nucleotide sequence ID" value="NC_008750.1"/>
</dbReference>
<dbReference type="SMR" id="A1REC7"/>
<dbReference type="GeneID" id="67441773"/>
<dbReference type="KEGG" id="shw:Sputw3181_0169"/>
<dbReference type="HOGENOM" id="CLU_139869_0_1_6"/>
<dbReference type="Proteomes" id="UP000002597">
    <property type="component" value="Chromosome"/>
</dbReference>
<dbReference type="GO" id="GO:0005737">
    <property type="term" value="C:cytoplasm"/>
    <property type="evidence" value="ECO:0007669"/>
    <property type="project" value="UniProtKB-ARBA"/>
</dbReference>
<dbReference type="GO" id="GO:0015935">
    <property type="term" value="C:small ribosomal subunit"/>
    <property type="evidence" value="ECO:0007669"/>
    <property type="project" value="TreeGrafter"/>
</dbReference>
<dbReference type="GO" id="GO:0019843">
    <property type="term" value="F:rRNA binding"/>
    <property type="evidence" value="ECO:0007669"/>
    <property type="project" value="UniProtKB-UniRule"/>
</dbReference>
<dbReference type="GO" id="GO:0003735">
    <property type="term" value="F:structural constituent of ribosome"/>
    <property type="evidence" value="ECO:0007669"/>
    <property type="project" value="InterPro"/>
</dbReference>
<dbReference type="GO" id="GO:0006412">
    <property type="term" value="P:translation"/>
    <property type="evidence" value="ECO:0007669"/>
    <property type="project" value="UniProtKB-UniRule"/>
</dbReference>
<dbReference type="FunFam" id="1.10.287.1480:FF:000001">
    <property type="entry name" value="30S ribosomal protein S14"/>
    <property type="match status" value="1"/>
</dbReference>
<dbReference type="Gene3D" id="1.10.287.1480">
    <property type="match status" value="1"/>
</dbReference>
<dbReference type="HAMAP" id="MF_00537">
    <property type="entry name" value="Ribosomal_uS14_1"/>
    <property type="match status" value="1"/>
</dbReference>
<dbReference type="InterPro" id="IPR001209">
    <property type="entry name" value="Ribosomal_uS14"/>
</dbReference>
<dbReference type="InterPro" id="IPR023036">
    <property type="entry name" value="Ribosomal_uS14_bac/plastid"/>
</dbReference>
<dbReference type="InterPro" id="IPR018271">
    <property type="entry name" value="Ribosomal_uS14_CS"/>
</dbReference>
<dbReference type="NCBIfam" id="NF006477">
    <property type="entry name" value="PRK08881.1"/>
    <property type="match status" value="1"/>
</dbReference>
<dbReference type="PANTHER" id="PTHR19836">
    <property type="entry name" value="30S RIBOSOMAL PROTEIN S14"/>
    <property type="match status" value="1"/>
</dbReference>
<dbReference type="PANTHER" id="PTHR19836:SF19">
    <property type="entry name" value="SMALL RIBOSOMAL SUBUNIT PROTEIN US14M"/>
    <property type="match status" value="1"/>
</dbReference>
<dbReference type="Pfam" id="PF00253">
    <property type="entry name" value="Ribosomal_S14"/>
    <property type="match status" value="1"/>
</dbReference>
<dbReference type="SUPFAM" id="SSF57716">
    <property type="entry name" value="Glucocorticoid receptor-like (DNA-binding domain)"/>
    <property type="match status" value="1"/>
</dbReference>
<dbReference type="PROSITE" id="PS00527">
    <property type="entry name" value="RIBOSOMAL_S14"/>
    <property type="match status" value="1"/>
</dbReference>
<accession>A1REC7</accession>
<keyword id="KW-0687">Ribonucleoprotein</keyword>
<keyword id="KW-0689">Ribosomal protein</keyword>
<keyword id="KW-0694">RNA-binding</keyword>
<keyword id="KW-0699">rRNA-binding</keyword>
<protein>
    <recommendedName>
        <fullName evidence="1">Small ribosomal subunit protein uS14</fullName>
    </recommendedName>
    <alternativeName>
        <fullName evidence="2">30S ribosomal protein S14</fullName>
    </alternativeName>
</protein>
<gene>
    <name evidence="1" type="primary">rpsN</name>
    <name type="ordered locus">Sputw3181_0169</name>
</gene>
<name>RS14_SHESW</name>
<feature type="chain" id="PRO_1000128585" description="Small ribosomal subunit protein uS14">
    <location>
        <begin position="1"/>
        <end position="101"/>
    </location>
</feature>
<organism>
    <name type="scientific">Shewanella sp. (strain W3-18-1)</name>
    <dbReference type="NCBI Taxonomy" id="351745"/>
    <lineage>
        <taxon>Bacteria</taxon>
        <taxon>Pseudomonadati</taxon>
        <taxon>Pseudomonadota</taxon>
        <taxon>Gammaproteobacteria</taxon>
        <taxon>Alteromonadales</taxon>
        <taxon>Shewanellaceae</taxon>
        <taxon>Shewanella</taxon>
    </lineage>
</organism>
<evidence type="ECO:0000255" key="1">
    <source>
        <dbReference type="HAMAP-Rule" id="MF_00537"/>
    </source>
</evidence>
<evidence type="ECO:0000305" key="2"/>
<proteinExistence type="inferred from homology"/>
<comment type="function">
    <text evidence="1">Binds 16S rRNA, required for the assembly of 30S particles and may also be responsible for determining the conformation of the 16S rRNA at the A site.</text>
</comment>
<comment type="subunit">
    <text evidence="1">Part of the 30S ribosomal subunit. Contacts proteins S3 and S10.</text>
</comment>
<comment type="similarity">
    <text evidence="1">Belongs to the universal ribosomal protein uS14 family.</text>
</comment>
<sequence length="101" mass="11406">MAKTSMKAREVKRAQLVAKYAEKRAALKAIIVSPASSDEDRWDAVLKLQALPRDSSASRKRNRCNQTGRPHGFLRKFGLSRIKLREATMRGEVPGLRKASW</sequence>